<comment type="function">
    <text evidence="1">Catalyzes the initial step of the lipid cycle reactions in the biosynthesis of the cell wall peptidoglycan: transfers peptidoglycan precursor phospho-MurNAc-pentapeptide from UDP-MurNAc-pentapeptide onto the lipid carrier undecaprenyl phosphate, yielding undecaprenyl-pyrophosphoryl-MurNAc-pentapeptide, known as lipid I.</text>
</comment>
<comment type="catalytic activity">
    <reaction evidence="1">
        <text>UDP-N-acetyl-alpha-D-muramoyl-L-alanyl-gamma-D-glutamyl-meso-2,6-diaminopimeloyl-D-alanyl-D-alanine + di-trans,octa-cis-undecaprenyl phosphate = di-trans,octa-cis-undecaprenyl diphospho-N-acetyl-alpha-D-muramoyl-L-alanyl-D-glutamyl-meso-2,6-diaminopimeloyl-D-alanyl-D-alanine + UMP</text>
        <dbReference type="Rhea" id="RHEA:28386"/>
        <dbReference type="ChEBI" id="CHEBI:57865"/>
        <dbReference type="ChEBI" id="CHEBI:60392"/>
        <dbReference type="ChEBI" id="CHEBI:61386"/>
        <dbReference type="ChEBI" id="CHEBI:61387"/>
        <dbReference type="EC" id="2.7.8.13"/>
    </reaction>
</comment>
<comment type="cofactor">
    <cofactor evidence="1">
        <name>Mg(2+)</name>
        <dbReference type="ChEBI" id="CHEBI:18420"/>
    </cofactor>
</comment>
<comment type="pathway">
    <text evidence="1">Cell wall biogenesis; peptidoglycan biosynthesis.</text>
</comment>
<comment type="subcellular location">
    <subcellularLocation>
        <location evidence="1">Cell inner membrane</location>
        <topology evidence="1">Multi-pass membrane protein</topology>
    </subcellularLocation>
</comment>
<comment type="similarity">
    <text evidence="1 2">Belongs to the glycosyltransferase 4 family. MraY subfamily.</text>
</comment>
<accession>P0A6W4</accession>
<accession>P15876</accession>
<evidence type="ECO:0000255" key="1">
    <source>
        <dbReference type="HAMAP-Rule" id="MF_00038"/>
    </source>
</evidence>
<evidence type="ECO:0000305" key="2"/>
<keyword id="KW-0131">Cell cycle</keyword>
<keyword id="KW-0132">Cell division</keyword>
<keyword id="KW-0997">Cell inner membrane</keyword>
<keyword id="KW-1003">Cell membrane</keyword>
<keyword id="KW-0133">Cell shape</keyword>
<keyword id="KW-0961">Cell wall biogenesis/degradation</keyword>
<keyword id="KW-0460">Magnesium</keyword>
<keyword id="KW-0472">Membrane</keyword>
<keyword id="KW-0479">Metal-binding</keyword>
<keyword id="KW-0573">Peptidoglycan synthesis</keyword>
<keyword id="KW-1185">Reference proteome</keyword>
<keyword id="KW-0808">Transferase</keyword>
<keyword id="KW-0812">Transmembrane</keyword>
<keyword id="KW-1133">Transmembrane helix</keyword>
<organism>
    <name type="scientific">Shigella flexneri</name>
    <dbReference type="NCBI Taxonomy" id="623"/>
    <lineage>
        <taxon>Bacteria</taxon>
        <taxon>Pseudomonadati</taxon>
        <taxon>Pseudomonadota</taxon>
        <taxon>Gammaproteobacteria</taxon>
        <taxon>Enterobacterales</taxon>
        <taxon>Enterobacteriaceae</taxon>
        <taxon>Shigella</taxon>
    </lineage>
</organism>
<name>MRAY_SHIFL</name>
<sequence length="360" mass="39875">MLVWLAEHLVKYYSGFNVFSYLTFRAIVSLLTALFISLWMGPRMIAHLQKLSFGQVVRNDGPESHFSKRGTPTMGGIMILTAIVISVLLWAYPSNPYVWCVLVVLVGYGVIGFVDDYRKVVRKDTKGLIARWKYFWMSVIALGVAFALYLAGKDTPATQLVVPFFKDVMPQLGLFYILLAYFVIVGTGNAVNLTDGLDGLAIMPTVFVAGGFALVAWATGNMNFASYLHIPYLRHAGELVIVCTAIVGAGLGFLWFNTYPAQVFMGDVGSLALGGALGIIAVLLRQEFLLVIMGGVFVVETLSVILQVGSFKLRGQRIFRMAPIHHHYELKGWPEPRVIVRFWIISLMLVLIGLATLKVR</sequence>
<proteinExistence type="inferred from homology"/>
<gene>
    <name evidence="1" type="primary">mraY</name>
    <name type="ordered locus">SF0084</name>
    <name type="ordered locus">S0086</name>
</gene>
<feature type="chain" id="PRO_0000108888" description="Phospho-N-acetylmuramoyl-pentapeptide-transferase">
    <location>
        <begin position="1"/>
        <end position="360"/>
    </location>
</feature>
<feature type="topological domain" description="Periplasmic" evidence="1">
    <location>
        <begin position="1"/>
        <end position="25"/>
    </location>
</feature>
<feature type="transmembrane region" description="Helical" evidence="1">
    <location>
        <begin position="26"/>
        <end position="46"/>
    </location>
</feature>
<feature type="topological domain" description="Cytoplasmic" evidence="1">
    <location>
        <begin position="47"/>
        <end position="71"/>
    </location>
</feature>
<feature type="transmembrane region" description="Helical" evidence="1">
    <location>
        <begin position="72"/>
        <end position="92"/>
    </location>
</feature>
<feature type="topological domain" description="Periplasmic" evidence="1">
    <location>
        <position position="93"/>
    </location>
</feature>
<feature type="transmembrane region" description="Helical" evidence="1">
    <location>
        <begin position="94"/>
        <end position="114"/>
    </location>
</feature>
<feature type="topological domain" description="Cytoplasmic" evidence="1">
    <location>
        <begin position="115"/>
        <end position="131"/>
    </location>
</feature>
<feature type="transmembrane region" description="Helical" evidence="1">
    <location>
        <begin position="132"/>
        <end position="152"/>
    </location>
</feature>
<feature type="topological domain" description="Periplasmic" evidence="1">
    <location>
        <begin position="153"/>
        <end position="167"/>
    </location>
</feature>
<feature type="transmembrane region" description="Helical" evidence="1">
    <location>
        <begin position="168"/>
        <end position="188"/>
    </location>
</feature>
<feature type="topological domain" description="Cytoplasmic" evidence="1">
    <location>
        <begin position="189"/>
        <end position="198"/>
    </location>
</feature>
<feature type="transmembrane region" description="Helical" evidence="1">
    <location>
        <begin position="199"/>
        <end position="219"/>
    </location>
</feature>
<feature type="topological domain" description="Periplasmic" evidence="1">
    <location>
        <begin position="220"/>
        <end position="235"/>
    </location>
</feature>
<feature type="transmembrane region" description="Helical" evidence="1">
    <location>
        <begin position="236"/>
        <end position="256"/>
    </location>
</feature>
<feature type="topological domain" description="Cytoplasmic" evidence="1">
    <location>
        <begin position="257"/>
        <end position="262"/>
    </location>
</feature>
<feature type="transmembrane region" description="Helical" evidence="1">
    <location>
        <begin position="263"/>
        <end position="283"/>
    </location>
</feature>
<feature type="topological domain" description="Periplasmic" evidence="1">
    <location>
        <begin position="284"/>
        <end position="287"/>
    </location>
</feature>
<feature type="transmembrane region" description="Helical" evidence="1">
    <location>
        <begin position="288"/>
        <end position="308"/>
    </location>
</feature>
<feature type="topological domain" description="Cytoplasmic" evidence="1">
    <location>
        <begin position="309"/>
        <end position="337"/>
    </location>
</feature>
<feature type="transmembrane region" description="Helical" evidence="1">
    <location>
        <begin position="338"/>
        <end position="358"/>
    </location>
</feature>
<feature type="topological domain" description="Periplasmic" evidence="1">
    <location>
        <begin position="359"/>
        <end position="360"/>
    </location>
</feature>
<protein>
    <recommendedName>
        <fullName evidence="1">Phospho-N-acetylmuramoyl-pentapeptide-transferase</fullName>
        <ecNumber evidence="1">2.7.8.13</ecNumber>
    </recommendedName>
    <alternativeName>
        <fullName evidence="1">UDP-MurNAc-pentapeptide phosphotransferase</fullName>
    </alternativeName>
</protein>
<reference key="1">
    <citation type="journal article" date="2002" name="Nucleic Acids Res.">
        <title>Genome sequence of Shigella flexneri 2a: insights into pathogenicity through comparison with genomes of Escherichia coli K12 and O157.</title>
        <authorList>
            <person name="Jin Q."/>
            <person name="Yuan Z."/>
            <person name="Xu J."/>
            <person name="Wang Y."/>
            <person name="Shen Y."/>
            <person name="Lu W."/>
            <person name="Wang J."/>
            <person name="Liu H."/>
            <person name="Yang J."/>
            <person name="Yang F."/>
            <person name="Zhang X."/>
            <person name="Zhang J."/>
            <person name="Yang G."/>
            <person name="Wu H."/>
            <person name="Qu D."/>
            <person name="Dong J."/>
            <person name="Sun L."/>
            <person name="Xue Y."/>
            <person name="Zhao A."/>
            <person name="Gao Y."/>
            <person name="Zhu J."/>
            <person name="Kan B."/>
            <person name="Ding K."/>
            <person name="Chen S."/>
            <person name="Cheng H."/>
            <person name="Yao Z."/>
            <person name="He B."/>
            <person name="Chen R."/>
            <person name="Ma D."/>
            <person name="Qiang B."/>
            <person name="Wen Y."/>
            <person name="Hou Y."/>
            <person name="Yu J."/>
        </authorList>
    </citation>
    <scope>NUCLEOTIDE SEQUENCE [LARGE SCALE GENOMIC DNA]</scope>
    <source>
        <strain>301 / Serotype 2a</strain>
    </source>
</reference>
<reference key="2">
    <citation type="journal article" date="2003" name="Infect. Immun.">
        <title>Complete genome sequence and comparative genomics of Shigella flexneri serotype 2a strain 2457T.</title>
        <authorList>
            <person name="Wei J."/>
            <person name="Goldberg M.B."/>
            <person name="Burland V."/>
            <person name="Venkatesan M.M."/>
            <person name="Deng W."/>
            <person name="Fournier G."/>
            <person name="Mayhew G.F."/>
            <person name="Plunkett G. III"/>
            <person name="Rose D.J."/>
            <person name="Darling A."/>
            <person name="Mau B."/>
            <person name="Perna N.T."/>
            <person name="Payne S.M."/>
            <person name="Runyen-Janecky L.J."/>
            <person name="Zhou S."/>
            <person name="Schwartz D.C."/>
            <person name="Blattner F.R."/>
        </authorList>
    </citation>
    <scope>NUCLEOTIDE SEQUENCE [LARGE SCALE GENOMIC DNA]</scope>
    <source>
        <strain>ATCC 700930 / 2457T / Serotype 2a</strain>
    </source>
</reference>
<dbReference type="EC" id="2.7.8.13" evidence="1"/>
<dbReference type="EMBL" id="AE005674">
    <property type="protein sequence ID" value="AAN41749.1"/>
    <property type="molecule type" value="Genomic_DNA"/>
</dbReference>
<dbReference type="EMBL" id="AE014073">
    <property type="protein sequence ID" value="AAP15630.1"/>
    <property type="molecule type" value="Genomic_DNA"/>
</dbReference>
<dbReference type="RefSeq" id="NP_706042.1">
    <property type="nucleotide sequence ID" value="NC_004337.2"/>
</dbReference>
<dbReference type="RefSeq" id="WP_000964131.1">
    <property type="nucleotide sequence ID" value="NZ_WPGW01000007.1"/>
</dbReference>
<dbReference type="SMR" id="P0A6W4"/>
<dbReference type="STRING" id="198214.SF0084"/>
<dbReference type="PaxDb" id="198214-SF0084"/>
<dbReference type="GeneID" id="1024554"/>
<dbReference type="GeneID" id="93777347"/>
<dbReference type="KEGG" id="sfl:SF0084"/>
<dbReference type="KEGG" id="sfx:S0086"/>
<dbReference type="PATRIC" id="fig|198214.7.peg.99"/>
<dbReference type="HOGENOM" id="CLU_023982_0_0_6"/>
<dbReference type="UniPathway" id="UPA00219"/>
<dbReference type="Proteomes" id="UP000001006">
    <property type="component" value="Chromosome"/>
</dbReference>
<dbReference type="Proteomes" id="UP000002673">
    <property type="component" value="Chromosome"/>
</dbReference>
<dbReference type="GO" id="GO:0005886">
    <property type="term" value="C:plasma membrane"/>
    <property type="evidence" value="ECO:0007669"/>
    <property type="project" value="UniProtKB-SubCell"/>
</dbReference>
<dbReference type="GO" id="GO:0046872">
    <property type="term" value="F:metal ion binding"/>
    <property type="evidence" value="ECO:0007669"/>
    <property type="project" value="UniProtKB-KW"/>
</dbReference>
<dbReference type="GO" id="GO:0008963">
    <property type="term" value="F:phospho-N-acetylmuramoyl-pentapeptide-transferase activity"/>
    <property type="evidence" value="ECO:0007669"/>
    <property type="project" value="UniProtKB-UniRule"/>
</dbReference>
<dbReference type="GO" id="GO:0051992">
    <property type="term" value="F:UDP-N-acetylmuramoyl-L-alanyl-D-glutamyl-meso-2,6-diaminopimelyl-D-alanyl-D-alanine:undecaprenyl-phosphate transferase activity"/>
    <property type="evidence" value="ECO:0007669"/>
    <property type="project" value="RHEA"/>
</dbReference>
<dbReference type="GO" id="GO:0051301">
    <property type="term" value="P:cell division"/>
    <property type="evidence" value="ECO:0007669"/>
    <property type="project" value="UniProtKB-KW"/>
</dbReference>
<dbReference type="GO" id="GO:0071555">
    <property type="term" value="P:cell wall organization"/>
    <property type="evidence" value="ECO:0007669"/>
    <property type="project" value="UniProtKB-KW"/>
</dbReference>
<dbReference type="GO" id="GO:0009252">
    <property type="term" value="P:peptidoglycan biosynthetic process"/>
    <property type="evidence" value="ECO:0007669"/>
    <property type="project" value="UniProtKB-UniRule"/>
</dbReference>
<dbReference type="GO" id="GO:0008360">
    <property type="term" value="P:regulation of cell shape"/>
    <property type="evidence" value="ECO:0007669"/>
    <property type="project" value="UniProtKB-KW"/>
</dbReference>
<dbReference type="CDD" id="cd06852">
    <property type="entry name" value="GT_MraY"/>
    <property type="match status" value="1"/>
</dbReference>
<dbReference type="HAMAP" id="MF_00038">
    <property type="entry name" value="MraY"/>
    <property type="match status" value="1"/>
</dbReference>
<dbReference type="InterPro" id="IPR000715">
    <property type="entry name" value="Glycosyl_transferase_4"/>
</dbReference>
<dbReference type="InterPro" id="IPR003524">
    <property type="entry name" value="PNAcMuramoyl-5peptid_Trfase"/>
</dbReference>
<dbReference type="InterPro" id="IPR018480">
    <property type="entry name" value="PNAcMuramoyl-5peptid_Trfase_CS"/>
</dbReference>
<dbReference type="NCBIfam" id="TIGR00445">
    <property type="entry name" value="mraY"/>
    <property type="match status" value="1"/>
</dbReference>
<dbReference type="PANTHER" id="PTHR22926">
    <property type="entry name" value="PHOSPHO-N-ACETYLMURAMOYL-PENTAPEPTIDE-TRANSFERASE"/>
    <property type="match status" value="1"/>
</dbReference>
<dbReference type="PANTHER" id="PTHR22926:SF5">
    <property type="entry name" value="PHOSPHO-N-ACETYLMURAMOYL-PENTAPEPTIDE-TRANSFERASE HOMOLOG"/>
    <property type="match status" value="1"/>
</dbReference>
<dbReference type="Pfam" id="PF00953">
    <property type="entry name" value="Glycos_transf_4"/>
    <property type="match status" value="1"/>
</dbReference>
<dbReference type="Pfam" id="PF10555">
    <property type="entry name" value="MraY_sig1"/>
    <property type="match status" value="1"/>
</dbReference>
<dbReference type="PROSITE" id="PS01347">
    <property type="entry name" value="MRAY_1"/>
    <property type="match status" value="1"/>
</dbReference>
<dbReference type="PROSITE" id="PS01348">
    <property type="entry name" value="MRAY_2"/>
    <property type="match status" value="1"/>
</dbReference>